<gene>
    <name type="ordered locus">PH0572</name>
</gene>
<comment type="function">
    <text evidence="1 2">Catalyzes the NAD(P)H-dependent reduction of polysulfide, CoA-polysulfides, and CoA persulfide, as well as the reduction of a range of other small persulfides, including TNB and glutathione persulfides. The likely in vivo substrates are di-, poly-, and persulfide derivatives of coenzyme A, although polysulfide itself is also efficiently reduced (PubMed:23530771). Shows coenzyme A disulfide reductase (CoADR) activity with both NADH and NADPH, with a preference for NADPH (PubMed:15720393). May also play a role in the reduction of elemental sulfur (PubMed:23530771).</text>
</comment>
<comment type="catalytic activity">
    <reaction evidence="1">
        <text>NADP(+) + 2 CoA = CoA-disulfide + NADPH + H(+)</text>
        <dbReference type="Rhea" id="RHEA:14705"/>
        <dbReference type="ChEBI" id="CHEBI:15378"/>
        <dbReference type="ChEBI" id="CHEBI:57287"/>
        <dbReference type="ChEBI" id="CHEBI:57783"/>
        <dbReference type="ChEBI" id="CHEBI:58349"/>
        <dbReference type="ChEBI" id="CHEBI:62209"/>
        <dbReference type="EC" id="1.8.1.14"/>
    </reaction>
</comment>
<comment type="catalytic activity">
    <reaction evidence="1">
        <text>NAD(+) + 2 CoA = CoA-disulfide + NADH + H(+)</text>
        <dbReference type="Rhea" id="RHEA:14701"/>
        <dbReference type="ChEBI" id="CHEBI:15378"/>
        <dbReference type="ChEBI" id="CHEBI:57287"/>
        <dbReference type="ChEBI" id="CHEBI:57540"/>
        <dbReference type="ChEBI" id="CHEBI:57945"/>
        <dbReference type="ChEBI" id="CHEBI:62209"/>
    </reaction>
</comment>
<comment type="cofactor">
    <cofactor evidence="1 2">
        <name>FAD</name>
        <dbReference type="ChEBI" id="CHEBI:57692"/>
    </cofactor>
    <text evidence="2">Binds 1 FAD per subunit.</text>
</comment>
<comment type="biophysicochemical properties">
    <kinetics>
        <KM evidence="1">73 uM for NADH</KM>
        <KM evidence="2">20.5 uM for CoA persulfide (in the presence of NADH)</KM>
        <KM evidence="2">56.2 uM for CoA persulfide (in the presence of NADPH)</KM>
        <KM evidence="2">13.9 uM for NADH (in the presence of CoA persulfide)</KM>
        <KM evidence="2">12.7 uM for NADPH (in the presence of CoA persulfide)</KM>
        <KM evidence="2">94.9 uM for CoA polysulfide (in the presence of NADH)</KM>
        <KM evidence="2">125 uM for NADH (in the presence of CoA polysulfide)</KM>
        <KM evidence="2">14.1 uM for NADPH (in the presence of CoA polysulfide)</KM>
        <KM evidence="2">12.3 uM for polysulfide (in the presence of NADH)</KM>
        <KM evidence="2">25.1 uM for TNB persulfide (in the presence of NADH)</KM>
        <KM evidence="2">129 uM for DTNB (in the presence of NADH)</KM>
        <text evidence="2">kcat is 1.11 sec(-1) with CoA persulfide as substrate (in the presence of NADH). kcat is 1.50 sec(-1) with CoA persulfide as substrate (in the presence of NADPH). kcat is 1.07 sec(-1) with NADH as substrate (in the presence of CoA persulfide). kcat is 2.08 sec(-1) with NADPH as substrate (in the presence of CoA persulfide). kcat is 6.56 sec(-1) with CoA polysulfide as substrate (in the presence of NADH). kcat is 8.86 sec(-1) with NADH as substrate (in the presence of CoA polysulfide). kcat is 16.1 sec(-1) with NADPH as substrate (in the presence of CoA polysulfide). kcat is 1.04 sec(-1) with polysulfide as substrate (in the presence of NADH). kcat is 3.37 sec(-1) with TNB persulfide as substrate (in the presence of NADH). kcat is 0.69 sec(-1) with DTNB as substrate (in the presence of NADH).</text>
    </kinetics>
    <temperatureDependence>
        <text evidence="1">Optimum temperature is 85 degrees Celsius. Thermostable.</text>
    </temperatureDependence>
</comment>
<comment type="subunit">
    <text evidence="1 2">Homodimer (PubMed:23530771). Homotetramer (PubMed:15720393).</text>
</comment>
<comment type="domain">
    <text evidence="2 3">When compared to homologous enzymes known to reduce CoA disulfide, this enzyme shows a narrower access channel for CoA substrates, which suggests that this restriction might be responsible for the enzyme's poor activity toward the bulky CoA disulfide substrate (PubMed:23530771). The substrate channel was widened by making four mutations along the channel wall (Y65A, Y66A, P67G, and H367G), leading to a fourfold increase in kcat for the NAD(P)H-dependent reduction of CoA disulfide and enhanced activity toward the substrate at lower temperatures (PubMed:29988575). It suggests that substrate channel morphology is an important determinant of substrate specificity for this family of pyridine nucleotide disulfide oxidoreductase (PNDOR) enzymes (PubMed:29988575).</text>
</comment>
<comment type="similarity">
    <text evidence="6">Belongs to the class-III pyridine nucleotide-disulfide oxidoreductase family.</text>
</comment>
<accession>O58308</accession>
<reference key="1">
    <citation type="journal article" date="1998" name="DNA Res.">
        <title>Complete sequence and gene organization of the genome of a hyper-thermophilic archaebacterium, Pyrococcus horikoshii OT3.</title>
        <authorList>
            <person name="Kawarabayasi Y."/>
            <person name="Sawada M."/>
            <person name="Horikawa H."/>
            <person name="Haikawa Y."/>
            <person name="Hino Y."/>
            <person name="Yamamoto S."/>
            <person name="Sekine M."/>
            <person name="Baba S."/>
            <person name="Kosugi H."/>
            <person name="Hosoyama A."/>
            <person name="Nagai Y."/>
            <person name="Sakai M."/>
            <person name="Ogura K."/>
            <person name="Otsuka R."/>
            <person name="Nakazawa H."/>
            <person name="Takamiya M."/>
            <person name="Ohfuku Y."/>
            <person name="Funahashi T."/>
            <person name="Tanaka T."/>
            <person name="Kudoh Y."/>
            <person name="Yamazaki J."/>
            <person name="Kushida N."/>
            <person name="Oguchi A."/>
            <person name="Aoki K."/>
            <person name="Yoshizawa T."/>
            <person name="Nakamura Y."/>
            <person name="Robb F.T."/>
            <person name="Horikoshi K."/>
            <person name="Masuchi Y."/>
            <person name="Shizuya H."/>
            <person name="Kikuchi H."/>
        </authorList>
    </citation>
    <scope>NUCLEOTIDE SEQUENCE [LARGE SCALE GENOMIC DNA]</scope>
    <source>
        <strain>ATCC 700860 / DSM 12428 / JCM 9974 / NBRC 100139 / OT-3</strain>
    </source>
</reference>
<reference key="2">
    <citation type="journal article" date="2005" name="FEBS J.">
        <title>Discovery and characterization of a coenzyme A disulfide reductase from Pyrococcus horikoshii. Implications for this disulfide metabolism of anaerobic hyperthermophiles.</title>
        <authorList>
            <person name="Harris D.R."/>
            <person name="Ward D.E."/>
            <person name="Feasel J.M."/>
            <person name="Lancaster K.M."/>
            <person name="Murphy R.D."/>
            <person name="Mallet T.C."/>
            <person name="Crane E.J. III"/>
        </authorList>
    </citation>
    <scope>FUNCTION AS A COA-DISULFIDE REDUCTASE</scope>
    <scope>CATALYTIC ACTIVITY</scope>
    <scope>COFACTOR</scope>
    <scope>BIOPHYSICOCHEMICAL PROPERTIES</scope>
    <scope>SUBUNIT</scope>
</reference>
<reference evidence="8" key="3">
    <citation type="submission" date="2009-10" db="PDB data bank">
        <title>Crystal structure of pyridine nucleotide disulfide oxidoreductase from Pyrococcus horikoshii.</title>
        <authorList>
            <person name="Agarwal R."/>
            <person name="Burley S.K."/>
            <person name="Swaminathan S."/>
        </authorList>
    </citation>
    <scope>X-RAY CRYSTALLOGRAPHY (2.75 ANGSTROMS) OF 7-444</scope>
</reference>
<reference evidence="9" key="4">
    <citation type="journal article" date="2013" name="Biochemistry">
        <title>Structure and substrate specificity of the pyrococcal coenzyme A disulfide reductases/polysulfide reductases (CoADR/Psr): implications for S(0)-based respiration and a sulfur-dependent antioxidant system in Pyrococcus.</title>
        <authorList>
            <person name="Herwald S."/>
            <person name="Liu A.Y."/>
            <person name="Zhu B.E."/>
            <person name="Sea K.W."/>
            <person name="Lopez K.M."/>
            <person name="Sazinsky M.H."/>
            <person name="Crane E.J."/>
        </authorList>
    </citation>
    <scope>X-RAY CRYSTALLOGRAPHY (2.70 ANGSTROMS) IN COMPLEX WITH COENZYME A AND FAD</scope>
    <scope>FUNCTION</scope>
    <scope>COFACTOR</scope>
    <scope>BIOPHYSICOCHEMICAL PROPERTIES</scope>
    <scope>SUBUNIT</scope>
    <scope>DOMAIN</scope>
</reference>
<reference evidence="10" key="5">
    <citation type="journal article" date="2018" name="FEBS Open Bio">
        <title>A broader active site in Pyrococcus horikoshii CoA disulfide reductase accommodates larger substrates and reveals evidence of subunit asymmetry.</title>
        <authorList>
            <person name="Sea K."/>
            <person name="Lee J."/>
            <person name="To D."/>
            <person name="Chen B."/>
            <person name="Sazinsky M.H."/>
            <person name="Crane E.J."/>
        </authorList>
    </citation>
    <scope>X-RAY CRYSTALLOGRAPHY (3.60 ANGSTROMS) OF QUADRUPLE MUTANT IN COMPLEX WITH COENZYME A AND FAD</scope>
    <scope>DOMAIN</scope>
</reference>
<sequence length="445" mass="48977">MGENMKKKVVIIGGGAAGMSAASRVKRLKPEWDVKVFEATEWVSHAPCGIPYVVEGLSTPDKLMYYPPEVFIKKRGIDLHLNAEVIEVDTGYVRVRENGGEKSYEWDYLVFANGASPQVPAIEGVNLKGVFTADLPPDALAIREYMEKYKVENVVIIGGGYIGIEMAEAFAAQGKNVTMIVRGERVLRRSFDKEVTDILEEKLKKHVNLRLQEITMKIEGEERVEKVVTDAGEYKAELVILATGIKPNIELAKQLGVRIGETGAIWTNEKMQTSVENVYAAGDVAETRHVITGRRVWVPLAPAGNKMGYVAGSNIAGKELHFPGVLGTAVTKFMDVEIGKTGLTEMEALKEGYDVRTAFIKASTRPHYYPGGREIWLKGVVDNETNRLLGVQVVGSDILPRIDTAAAMLMAGFTTKDAFFTDLAYAPPFAPVWDPLIVLARVLKF</sequence>
<keyword id="KW-0002">3D-structure</keyword>
<keyword id="KW-0274">FAD</keyword>
<keyword id="KW-0285">Flavoprotein</keyword>
<keyword id="KW-0520">NAD</keyword>
<keyword id="KW-0521">NADP</keyword>
<keyword id="KW-0560">Oxidoreductase</keyword>
<keyword id="KW-0676">Redox-active center</keyword>
<protein>
    <recommendedName>
        <fullName evidence="6">NAD(P)H coenzyme A polysulfide/persulfide reductase</fullName>
        <ecNumber evidence="2">1.8.1.-</ecNumber>
    </recommendedName>
    <alternativeName>
        <fullName evidence="4 5">Coenzyme A disulfide reductase</fullName>
        <shortName evidence="6">CoA-disulfide reductase</shortName>
        <shortName evidence="4">CoADR</shortName>
        <ecNumber evidence="1">1.8.1.14</ecNumber>
    </alternativeName>
    <alternativeName>
        <fullName evidence="5">Polysulfide reductase</fullName>
    </alternativeName>
</protein>
<name>NCPPR_PYRHO</name>
<organism>
    <name type="scientific">Pyrococcus horikoshii (strain ATCC 700860 / DSM 12428 / JCM 9974 / NBRC 100139 / OT-3)</name>
    <dbReference type="NCBI Taxonomy" id="70601"/>
    <lineage>
        <taxon>Archaea</taxon>
        <taxon>Methanobacteriati</taxon>
        <taxon>Methanobacteriota</taxon>
        <taxon>Thermococci</taxon>
        <taxon>Thermococcales</taxon>
        <taxon>Thermococcaceae</taxon>
        <taxon>Pyrococcus</taxon>
    </lineage>
</organism>
<evidence type="ECO:0000269" key="1">
    <source>
    </source>
</evidence>
<evidence type="ECO:0000269" key="2">
    <source>
    </source>
</evidence>
<evidence type="ECO:0000269" key="3">
    <source>
    </source>
</evidence>
<evidence type="ECO:0000303" key="4">
    <source>
    </source>
</evidence>
<evidence type="ECO:0000303" key="5">
    <source>
    </source>
</evidence>
<evidence type="ECO:0000305" key="6"/>
<evidence type="ECO:0000305" key="7">
    <source>
    </source>
</evidence>
<evidence type="ECO:0007744" key="8">
    <source>
        <dbReference type="PDB" id="3KD9"/>
    </source>
</evidence>
<evidence type="ECO:0007744" key="9">
    <source>
        <dbReference type="PDB" id="4FX9"/>
    </source>
</evidence>
<evidence type="ECO:0007744" key="10">
    <source>
        <dbReference type="PDB" id="5L1N"/>
    </source>
</evidence>
<evidence type="ECO:0007829" key="11">
    <source>
        <dbReference type="PDB" id="3KD9"/>
    </source>
</evidence>
<evidence type="ECO:0007829" key="12">
    <source>
        <dbReference type="PDB" id="4FX9"/>
    </source>
</evidence>
<dbReference type="EC" id="1.8.1.-" evidence="2"/>
<dbReference type="EC" id="1.8.1.14" evidence="1"/>
<dbReference type="EMBL" id="BA000001">
    <property type="protein sequence ID" value="BAA29661.1"/>
    <property type="molecule type" value="Genomic_DNA"/>
</dbReference>
<dbReference type="PIR" id="H71171">
    <property type="entry name" value="H71171"/>
</dbReference>
<dbReference type="PDB" id="3KD9">
    <property type="method" value="X-ray"/>
    <property type="resolution" value="2.75 A"/>
    <property type="chains" value="A/B/C=7-444"/>
</dbReference>
<dbReference type="PDB" id="4FX9">
    <property type="method" value="X-ray"/>
    <property type="resolution" value="2.70 A"/>
    <property type="chains" value="A/B=1-445"/>
</dbReference>
<dbReference type="PDB" id="5L1N">
    <property type="method" value="X-ray"/>
    <property type="resolution" value="3.60 A"/>
    <property type="chains" value="A/B=1-445"/>
</dbReference>
<dbReference type="PDBsum" id="3KD9"/>
<dbReference type="PDBsum" id="4FX9"/>
<dbReference type="PDBsum" id="5L1N"/>
<dbReference type="SMR" id="O58308"/>
<dbReference type="STRING" id="70601.gene:9377511"/>
<dbReference type="EnsemblBacteria" id="BAA29661">
    <property type="protein sequence ID" value="BAA29661"/>
    <property type="gene ID" value="BAA29661"/>
</dbReference>
<dbReference type="KEGG" id="pho:PH0572"/>
<dbReference type="eggNOG" id="arCOG01069">
    <property type="taxonomic scope" value="Archaea"/>
</dbReference>
<dbReference type="BRENDA" id="1.8.1.14">
    <property type="organism ID" value="5244"/>
</dbReference>
<dbReference type="SABIO-RK" id="O58308"/>
<dbReference type="EvolutionaryTrace" id="O58308"/>
<dbReference type="Proteomes" id="UP000000752">
    <property type="component" value="Chromosome"/>
</dbReference>
<dbReference type="GO" id="GO:0050451">
    <property type="term" value="F:CoA-disulfide reductase (NADPH) activity"/>
    <property type="evidence" value="ECO:0007669"/>
    <property type="project" value="UniProtKB-EC"/>
</dbReference>
<dbReference type="GO" id="GO:0050660">
    <property type="term" value="F:flavin adenine dinucleotide binding"/>
    <property type="evidence" value="ECO:0007669"/>
    <property type="project" value="InterPro"/>
</dbReference>
<dbReference type="GO" id="GO:0050661">
    <property type="term" value="F:NADP binding"/>
    <property type="evidence" value="ECO:0007669"/>
    <property type="project" value="InterPro"/>
</dbReference>
<dbReference type="GO" id="GO:0003756">
    <property type="term" value="F:protein disulfide isomerase activity"/>
    <property type="evidence" value="ECO:0007669"/>
    <property type="project" value="InterPro"/>
</dbReference>
<dbReference type="Gene3D" id="3.50.50.60">
    <property type="entry name" value="FAD/NAD(P)-binding domain"/>
    <property type="match status" value="3"/>
</dbReference>
<dbReference type="InterPro" id="IPR017758">
    <property type="entry name" value="CoA_disulphide_reductase"/>
</dbReference>
<dbReference type="InterPro" id="IPR050260">
    <property type="entry name" value="FAD-bd_OxRdtase"/>
</dbReference>
<dbReference type="InterPro" id="IPR036188">
    <property type="entry name" value="FAD/NAD-bd_sf"/>
</dbReference>
<dbReference type="InterPro" id="IPR023753">
    <property type="entry name" value="FAD/NAD-binding_dom"/>
</dbReference>
<dbReference type="InterPro" id="IPR016156">
    <property type="entry name" value="FAD/NAD-linked_Rdtase_dimer_sf"/>
</dbReference>
<dbReference type="InterPro" id="IPR004099">
    <property type="entry name" value="Pyr_nucl-diS_OxRdtase_dimer"/>
</dbReference>
<dbReference type="NCBIfam" id="TIGR03385">
    <property type="entry name" value="CoA_CoA_reduc"/>
    <property type="match status" value="1"/>
</dbReference>
<dbReference type="PANTHER" id="PTHR43429:SF1">
    <property type="entry name" value="NAD(P)H SULFUR OXIDOREDUCTASE (COA-DEPENDENT)"/>
    <property type="match status" value="1"/>
</dbReference>
<dbReference type="PANTHER" id="PTHR43429">
    <property type="entry name" value="PYRIDINE NUCLEOTIDE-DISULFIDE OXIDOREDUCTASE DOMAIN-CONTAINING"/>
    <property type="match status" value="1"/>
</dbReference>
<dbReference type="Pfam" id="PF07992">
    <property type="entry name" value="Pyr_redox_2"/>
    <property type="match status" value="1"/>
</dbReference>
<dbReference type="Pfam" id="PF02852">
    <property type="entry name" value="Pyr_redox_dim"/>
    <property type="match status" value="1"/>
</dbReference>
<dbReference type="PRINTS" id="PR00368">
    <property type="entry name" value="FADPNR"/>
</dbReference>
<dbReference type="PRINTS" id="PR00411">
    <property type="entry name" value="PNDRDTASEI"/>
</dbReference>
<dbReference type="SUPFAM" id="SSF51905">
    <property type="entry name" value="FAD/NAD(P)-binding domain"/>
    <property type="match status" value="1"/>
</dbReference>
<dbReference type="SUPFAM" id="SSF55424">
    <property type="entry name" value="FAD/NAD-linked reductases, dimerisation (C-terminal) domain"/>
    <property type="match status" value="1"/>
</dbReference>
<feature type="chain" id="PRO_0000184699" description="NAD(P)H coenzyme A polysulfide/persulfide reductase">
    <location>
        <begin position="1"/>
        <end position="445"/>
    </location>
</feature>
<feature type="active site" description="Redox-active" evidence="7">
    <location>
        <position position="48"/>
    </location>
</feature>
<feature type="binding site" evidence="2 3 9">
    <location>
        <begin position="16"/>
        <end position="17"/>
    </location>
    <ligand>
        <name>FAD</name>
        <dbReference type="ChEBI" id="CHEBI:57692"/>
    </ligand>
</feature>
<feature type="binding site" evidence="2 3 9">
    <location>
        <position position="27"/>
    </location>
    <ligand>
        <name>CoA</name>
        <dbReference type="ChEBI" id="CHEBI:57287"/>
    </ligand>
</feature>
<feature type="binding site" evidence="2 3 9">
    <location>
        <begin position="38"/>
        <end position="39"/>
    </location>
    <ligand>
        <name>FAD</name>
        <dbReference type="ChEBI" id="CHEBI:57692"/>
    </ligand>
</feature>
<feature type="binding site" evidence="2 3 9">
    <location>
        <begin position="44"/>
        <end position="48"/>
    </location>
    <ligand>
        <name>CoA</name>
        <dbReference type="ChEBI" id="CHEBI:57287"/>
    </ligand>
</feature>
<feature type="binding site" evidence="2 3 9">
    <location>
        <begin position="45"/>
        <end position="47"/>
    </location>
    <ligand>
        <name>FAD</name>
        <dbReference type="ChEBI" id="CHEBI:57692"/>
    </ligand>
</feature>
<feature type="binding site" evidence="2 9">
    <location>
        <begin position="65"/>
        <end position="66"/>
    </location>
    <ligand>
        <name>CoA</name>
        <dbReference type="ChEBI" id="CHEBI:57287"/>
    </ligand>
</feature>
<feature type="binding site" evidence="2 3 9">
    <location>
        <position position="75"/>
    </location>
    <ligand>
        <name>CoA</name>
        <dbReference type="ChEBI" id="CHEBI:57287"/>
    </ligand>
</feature>
<feature type="binding site" evidence="2 3 9">
    <location>
        <position position="85"/>
    </location>
    <ligand>
        <name>FAD</name>
        <dbReference type="ChEBI" id="CHEBI:57692"/>
    </ligand>
</feature>
<feature type="binding site" evidence="2 3 9">
    <location>
        <position position="283"/>
    </location>
    <ligand>
        <name>FAD</name>
        <dbReference type="ChEBI" id="CHEBI:57692"/>
    </ligand>
</feature>
<feature type="binding site" evidence="2 9">
    <location>
        <position position="301"/>
    </location>
    <ligand>
        <name>FAD</name>
        <dbReference type="ChEBI" id="CHEBI:57692"/>
    </ligand>
</feature>
<feature type="binding site" evidence="2 3 9">
    <location>
        <position position="305"/>
    </location>
    <ligand>
        <name>CoA</name>
        <dbReference type="ChEBI" id="CHEBI:57287"/>
    </ligand>
</feature>
<feature type="binding site" evidence="2 3 9">
    <location>
        <position position="361"/>
    </location>
    <ligand>
        <name>CoA</name>
        <dbReference type="ChEBI" id="CHEBI:57287"/>
    </ligand>
</feature>
<feature type="binding site" evidence="2 3 9">
    <location>
        <position position="425"/>
    </location>
    <ligand>
        <name>FAD</name>
        <dbReference type="ChEBI" id="CHEBI:57692"/>
    </ligand>
</feature>
<feature type="binding site" evidence="2 3 9">
    <location>
        <position position="433"/>
    </location>
    <ligand>
        <name>CoA</name>
        <dbReference type="ChEBI" id="CHEBI:57287"/>
    </ligand>
</feature>
<feature type="binding site" evidence="2 3 9">
    <location>
        <position position="441"/>
    </location>
    <ligand>
        <name>CoA</name>
        <dbReference type="ChEBI" id="CHEBI:57287"/>
    </ligand>
</feature>
<feature type="strand" evidence="12">
    <location>
        <begin position="8"/>
        <end position="12"/>
    </location>
</feature>
<feature type="helix" evidence="12">
    <location>
        <begin position="16"/>
        <end position="28"/>
    </location>
</feature>
<feature type="strand" evidence="12">
    <location>
        <begin position="32"/>
        <end position="37"/>
    </location>
</feature>
<feature type="strand" evidence="12">
    <location>
        <begin position="39"/>
        <end position="41"/>
    </location>
</feature>
<feature type="strand" evidence="12">
    <location>
        <begin position="43"/>
        <end position="45"/>
    </location>
</feature>
<feature type="helix" evidence="12">
    <location>
        <begin position="47"/>
        <end position="49"/>
    </location>
</feature>
<feature type="helix" evidence="12">
    <location>
        <begin position="50"/>
        <end position="54"/>
    </location>
</feature>
<feature type="helix" evidence="12">
    <location>
        <begin position="60"/>
        <end position="63"/>
    </location>
</feature>
<feature type="strand" evidence="12">
    <location>
        <begin position="64"/>
        <end position="66"/>
    </location>
</feature>
<feature type="helix" evidence="12">
    <location>
        <begin position="68"/>
        <end position="72"/>
    </location>
</feature>
<feature type="turn" evidence="12">
    <location>
        <begin position="73"/>
        <end position="75"/>
    </location>
</feature>
<feature type="strand" evidence="12">
    <location>
        <begin position="78"/>
        <end position="80"/>
    </location>
</feature>
<feature type="strand" evidence="12">
    <location>
        <begin position="84"/>
        <end position="89"/>
    </location>
</feature>
<feature type="strand" evidence="12">
    <location>
        <begin position="92"/>
        <end position="96"/>
    </location>
</feature>
<feature type="strand" evidence="12">
    <location>
        <begin position="103"/>
        <end position="105"/>
    </location>
</feature>
<feature type="strand" evidence="12">
    <location>
        <begin position="107"/>
        <end position="111"/>
    </location>
</feature>
<feature type="strand" evidence="12">
    <location>
        <begin position="115"/>
        <end position="117"/>
    </location>
</feature>
<feature type="turn" evidence="12">
    <location>
        <begin position="124"/>
        <end position="126"/>
    </location>
</feature>
<feature type="helix" evidence="12">
    <location>
        <begin position="136"/>
        <end position="148"/>
    </location>
</feature>
<feature type="strand" evidence="12">
    <location>
        <begin position="153"/>
        <end position="157"/>
    </location>
</feature>
<feature type="helix" evidence="12">
    <location>
        <begin position="161"/>
        <end position="171"/>
    </location>
</feature>
<feature type="turn" evidence="12">
    <location>
        <begin position="172"/>
        <end position="174"/>
    </location>
</feature>
<feature type="strand" evidence="12">
    <location>
        <begin position="176"/>
        <end position="180"/>
    </location>
</feature>
<feature type="strand" evidence="12">
    <location>
        <begin position="182"/>
        <end position="185"/>
    </location>
</feature>
<feature type="turn" evidence="12">
    <location>
        <begin position="186"/>
        <end position="190"/>
    </location>
</feature>
<feature type="helix" evidence="12">
    <location>
        <begin position="193"/>
        <end position="206"/>
    </location>
</feature>
<feature type="strand" evidence="12">
    <location>
        <begin position="207"/>
        <end position="210"/>
    </location>
</feature>
<feature type="strand" evidence="12">
    <location>
        <begin position="215"/>
        <end position="231"/>
    </location>
</feature>
<feature type="strand" evidence="12">
    <location>
        <begin position="233"/>
        <end position="235"/>
    </location>
</feature>
<feature type="strand" evidence="12">
    <location>
        <begin position="237"/>
        <end position="241"/>
    </location>
</feature>
<feature type="strand" evidence="12">
    <location>
        <begin position="245"/>
        <end position="247"/>
    </location>
</feature>
<feature type="helix" evidence="12">
    <location>
        <begin position="250"/>
        <end position="253"/>
    </location>
</feature>
<feature type="turn" evidence="12">
    <location>
        <begin position="254"/>
        <end position="256"/>
    </location>
</feature>
<feature type="strand" evidence="12">
    <location>
        <begin position="263"/>
        <end position="266"/>
    </location>
</feature>
<feature type="strand" evidence="12">
    <location>
        <begin position="278"/>
        <end position="280"/>
    </location>
</feature>
<feature type="helix" evidence="12">
    <location>
        <begin position="282"/>
        <end position="284"/>
    </location>
</feature>
<feature type="strand" evidence="12">
    <location>
        <begin position="285"/>
        <end position="289"/>
    </location>
</feature>
<feature type="turn" evidence="12">
    <location>
        <begin position="290"/>
        <end position="292"/>
    </location>
</feature>
<feature type="strand" evidence="11">
    <location>
        <begin position="294"/>
        <end position="296"/>
    </location>
</feature>
<feature type="helix" evidence="12">
    <location>
        <begin position="301"/>
        <end position="315"/>
    </location>
</feature>
<feature type="strand" evidence="12">
    <location>
        <begin position="329"/>
        <end position="333"/>
    </location>
</feature>
<feature type="strand" evidence="12">
    <location>
        <begin position="336"/>
        <end position="342"/>
    </location>
</feature>
<feature type="helix" evidence="12">
    <location>
        <begin position="345"/>
        <end position="350"/>
    </location>
</feature>
<feature type="strand" evidence="12">
    <location>
        <begin position="355"/>
        <end position="365"/>
    </location>
</feature>
<feature type="strand" evidence="12">
    <location>
        <begin position="367"/>
        <end position="370"/>
    </location>
</feature>
<feature type="strand" evidence="12">
    <location>
        <begin position="374"/>
        <end position="382"/>
    </location>
</feature>
<feature type="turn" evidence="12">
    <location>
        <begin position="383"/>
        <end position="385"/>
    </location>
</feature>
<feature type="strand" evidence="12">
    <location>
        <begin position="387"/>
        <end position="397"/>
    </location>
</feature>
<feature type="helix" evidence="12">
    <location>
        <begin position="399"/>
        <end position="411"/>
    </location>
</feature>
<feature type="helix" evidence="12">
    <location>
        <begin position="415"/>
        <end position="419"/>
    </location>
</feature>
<feature type="turn" evidence="12">
    <location>
        <begin position="427"/>
        <end position="429"/>
    </location>
</feature>
<feature type="helix" evidence="12">
    <location>
        <begin position="435"/>
        <end position="443"/>
    </location>
</feature>
<proteinExistence type="evidence at protein level"/>